<evidence type="ECO:0000255" key="1">
    <source>
        <dbReference type="HAMAP-Rule" id="MF_00094"/>
    </source>
</evidence>
<keyword id="KW-0963">Cytoplasm</keyword>
<keyword id="KW-0488">Methylation</keyword>
<keyword id="KW-0648">Protein biosynthesis</keyword>
<gene>
    <name evidence="1" type="primary">prfB</name>
    <name type="ordered locus">CTA_0501</name>
</gene>
<proteinExistence type="inferred from homology"/>
<comment type="function">
    <text evidence="1">Peptide chain release factor 2 directs the termination of translation in response to the peptide chain termination codons UGA and UAA.</text>
</comment>
<comment type="subcellular location">
    <subcellularLocation>
        <location evidence="1">Cytoplasm</location>
    </subcellularLocation>
</comment>
<comment type="PTM">
    <text evidence="1">Methylated by PrmC. Methylation increases the termination efficiency of RF2.</text>
</comment>
<comment type="similarity">
    <text evidence="1">Belongs to the prokaryotic/mitochondrial release factor family.</text>
</comment>
<accession>Q3KLN9</accession>
<feature type="chain" id="PRO_1000004983" description="Peptide chain release factor 2">
    <location>
        <begin position="1"/>
        <end position="369"/>
    </location>
</feature>
<feature type="modified residue" description="N5-methylglutamine" evidence="1">
    <location>
        <position position="251"/>
    </location>
</feature>
<name>RF2_CHLTA</name>
<organism>
    <name type="scientific">Chlamydia trachomatis serovar A (strain ATCC VR-571B / DSM 19440 / HAR-13)</name>
    <dbReference type="NCBI Taxonomy" id="315277"/>
    <lineage>
        <taxon>Bacteria</taxon>
        <taxon>Pseudomonadati</taxon>
        <taxon>Chlamydiota</taxon>
        <taxon>Chlamydiia</taxon>
        <taxon>Chlamydiales</taxon>
        <taxon>Chlamydiaceae</taxon>
        <taxon>Chlamydia/Chlamydophila group</taxon>
        <taxon>Chlamydia</taxon>
    </lineage>
</organism>
<sequence length="369" mass="42608">MHENFDKRLELLLEGLALTRRSLFDPEGKENELKELEQQAVQDGFWDDVVRAGKISERIARLKQQLSEFNELKNKVSAIQFFLEDEESSKDLEMQKELEKEFVFCEKKITEWETLRLLSGELDRNSCFLSINAGAGGTESCDWVEMLLRMYMRWASSHSWRIEVIDRLDGEVAGIKHITLKLVGEYAYGYAKAESGVHRLVRISPFDSNAKRHTSFASVEVFPEIDDKIEVEIRPGDIRIDTYRSSGAGGQHVNVTDSAVRITHFPTGIVVSCQNERSQIQNREACMNMLRARIYQKLLQERLEKQNIDRKNKKEISWGSQIRNYVFQPYTLVKDVRTGYEVGNIQAMMDGELLDAFIKAYLVDYGEIT</sequence>
<reference key="1">
    <citation type="journal article" date="2005" name="Infect. Immun.">
        <title>Comparative genomic analysis of Chlamydia trachomatis oculotropic and genitotropic strains.</title>
        <authorList>
            <person name="Carlson J.H."/>
            <person name="Porcella S.F."/>
            <person name="McClarty G."/>
            <person name="Caldwell H.D."/>
        </authorList>
    </citation>
    <scope>NUCLEOTIDE SEQUENCE [LARGE SCALE GENOMIC DNA]</scope>
    <source>
        <strain>ATCC VR-571B / DSM 19440 / HAR-13</strain>
    </source>
</reference>
<dbReference type="EMBL" id="CP000051">
    <property type="protein sequence ID" value="AAX50733.1"/>
    <property type="molecule type" value="Genomic_DNA"/>
</dbReference>
<dbReference type="RefSeq" id="WP_010725203.1">
    <property type="nucleotide sequence ID" value="NC_007429.1"/>
</dbReference>
<dbReference type="SMR" id="Q3KLN9"/>
<dbReference type="KEGG" id="cta:CTA_0501"/>
<dbReference type="HOGENOM" id="CLU_221953_0_0_0"/>
<dbReference type="Proteomes" id="UP000002532">
    <property type="component" value="Chromosome"/>
</dbReference>
<dbReference type="GO" id="GO:0005737">
    <property type="term" value="C:cytoplasm"/>
    <property type="evidence" value="ECO:0007669"/>
    <property type="project" value="UniProtKB-SubCell"/>
</dbReference>
<dbReference type="GO" id="GO:0016149">
    <property type="term" value="F:translation release factor activity, codon specific"/>
    <property type="evidence" value="ECO:0007669"/>
    <property type="project" value="UniProtKB-UniRule"/>
</dbReference>
<dbReference type="FunFam" id="3.30.160.20:FF:000004">
    <property type="entry name" value="Peptide chain release factor 1"/>
    <property type="match status" value="1"/>
</dbReference>
<dbReference type="Gene3D" id="3.30.160.20">
    <property type="match status" value="1"/>
</dbReference>
<dbReference type="Gene3D" id="3.30.70.1660">
    <property type="match status" value="1"/>
</dbReference>
<dbReference type="Gene3D" id="1.20.58.410">
    <property type="entry name" value="Release factor"/>
    <property type="match status" value="1"/>
</dbReference>
<dbReference type="HAMAP" id="MF_00094">
    <property type="entry name" value="Rel_fac_2"/>
    <property type="match status" value="1"/>
</dbReference>
<dbReference type="InterPro" id="IPR005139">
    <property type="entry name" value="PCRF"/>
</dbReference>
<dbReference type="InterPro" id="IPR000352">
    <property type="entry name" value="Pep_chain_release_fac_I"/>
</dbReference>
<dbReference type="InterPro" id="IPR045853">
    <property type="entry name" value="Pep_chain_release_fac_I_sf"/>
</dbReference>
<dbReference type="InterPro" id="IPR004374">
    <property type="entry name" value="PrfB"/>
</dbReference>
<dbReference type="NCBIfam" id="TIGR00020">
    <property type="entry name" value="prfB"/>
    <property type="match status" value="1"/>
</dbReference>
<dbReference type="PANTHER" id="PTHR43116:SF3">
    <property type="entry name" value="CLASS I PEPTIDE CHAIN RELEASE FACTOR"/>
    <property type="match status" value="1"/>
</dbReference>
<dbReference type="PANTHER" id="PTHR43116">
    <property type="entry name" value="PEPTIDE CHAIN RELEASE FACTOR 2"/>
    <property type="match status" value="1"/>
</dbReference>
<dbReference type="Pfam" id="PF03462">
    <property type="entry name" value="PCRF"/>
    <property type="match status" value="1"/>
</dbReference>
<dbReference type="Pfam" id="PF00472">
    <property type="entry name" value="RF-1"/>
    <property type="match status" value="1"/>
</dbReference>
<dbReference type="SMART" id="SM00937">
    <property type="entry name" value="PCRF"/>
    <property type="match status" value="1"/>
</dbReference>
<dbReference type="SUPFAM" id="SSF75620">
    <property type="entry name" value="Release factor"/>
    <property type="match status" value="1"/>
</dbReference>
<dbReference type="PROSITE" id="PS00745">
    <property type="entry name" value="RF_PROK_I"/>
    <property type="match status" value="1"/>
</dbReference>
<protein>
    <recommendedName>
        <fullName evidence="1">Peptide chain release factor 2</fullName>
        <shortName evidence="1">RF-2</shortName>
    </recommendedName>
</protein>